<proteinExistence type="evidence at protein level"/>
<gene>
    <name evidence="1" type="primary">rpmI</name>
    <name type="ordered locus">MRA_1653</name>
</gene>
<comment type="similarity">
    <text evidence="1">Belongs to the bacterial ribosomal protein bL35 family.</text>
</comment>
<dbReference type="EMBL" id="CP000611">
    <property type="protein sequence ID" value="ABQ73399.1"/>
    <property type="molecule type" value="Genomic_DNA"/>
</dbReference>
<dbReference type="RefSeq" id="WP_003408106.1">
    <property type="nucleotide sequence ID" value="NZ_CP016972.1"/>
</dbReference>
<dbReference type="PDB" id="7F0D">
    <property type="method" value="EM"/>
    <property type="resolution" value="3.30 A"/>
    <property type="chains" value="3=1-64"/>
</dbReference>
<dbReference type="PDBsum" id="7F0D"/>
<dbReference type="SMR" id="A5U2Z9"/>
<dbReference type="GeneID" id="45425612"/>
<dbReference type="KEGG" id="mra:MRA_1653"/>
<dbReference type="eggNOG" id="COG0291">
    <property type="taxonomic scope" value="Bacteria"/>
</dbReference>
<dbReference type="HOGENOM" id="CLU_169643_4_2_11"/>
<dbReference type="Proteomes" id="UP000001988">
    <property type="component" value="Chromosome"/>
</dbReference>
<dbReference type="GO" id="GO:0022625">
    <property type="term" value="C:cytosolic large ribosomal subunit"/>
    <property type="evidence" value="ECO:0007669"/>
    <property type="project" value="TreeGrafter"/>
</dbReference>
<dbReference type="GO" id="GO:0003735">
    <property type="term" value="F:structural constituent of ribosome"/>
    <property type="evidence" value="ECO:0007669"/>
    <property type="project" value="InterPro"/>
</dbReference>
<dbReference type="GO" id="GO:0006412">
    <property type="term" value="P:translation"/>
    <property type="evidence" value="ECO:0007669"/>
    <property type="project" value="UniProtKB-UniRule"/>
</dbReference>
<dbReference type="FunFam" id="4.10.410.60:FF:000001">
    <property type="entry name" value="50S ribosomal protein L35"/>
    <property type="match status" value="1"/>
</dbReference>
<dbReference type="Gene3D" id="4.10.410.60">
    <property type="match status" value="1"/>
</dbReference>
<dbReference type="HAMAP" id="MF_00514">
    <property type="entry name" value="Ribosomal_bL35"/>
    <property type="match status" value="1"/>
</dbReference>
<dbReference type="InterPro" id="IPR001706">
    <property type="entry name" value="Ribosomal_bL35"/>
</dbReference>
<dbReference type="InterPro" id="IPR021137">
    <property type="entry name" value="Ribosomal_bL35-like"/>
</dbReference>
<dbReference type="InterPro" id="IPR018265">
    <property type="entry name" value="Ribosomal_bL35_CS"/>
</dbReference>
<dbReference type="InterPro" id="IPR037229">
    <property type="entry name" value="Ribosomal_bL35_sf"/>
</dbReference>
<dbReference type="NCBIfam" id="TIGR00001">
    <property type="entry name" value="rpmI_bact"/>
    <property type="match status" value="1"/>
</dbReference>
<dbReference type="PANTHER" id="PTHR33343">
    <property type="entry name" value="54S RIBOSOMAL PROTEIN BL35M"/>
    <property type="match status" value="1"/>
</dbReference>
<dbReference type="PANTHER" id="PTHR33343:SF1">
    <property type="entry name" value="LARGE RIBOSOMAL SUBUNIT PROTEIN BL35M"/>
    <property type="match status" value="1"/>
</dbReference>
<dbReference type="Pfam" id="PF01632">
    <property type="entry name" value="Ribosomal_L35p"/>
    <property type="match status" value="1"/>
</dbReference>
<dbReference type="PRINTS" id="PR00064">
    <property type="entry name" value="RIBOSOMALL35"/>
</dbReference>
<dbReference type="SUPFAM" id="SSF143034">
    <property type="entry name" value="L35p-like"/>
    <property type="match status" value="1"/>
</dbReference>
<dbReference type="PROSITE" id="PS00936">
    <property type="entry name" value="RIBOSOMAL_L35"/>
    <property type="match status" value="1"/>
</dbReference>
<evidence type="ECO:0000255" key="1">
    <source>
        <dbReference type="HAMAP-Rule" id="MF_00514"/>
    </source>
</evidence>
<evidence type="ECO:0000256" key="2">
    <source>
        <dbReference type="SAM" id="MobiDB-lite"/>
    </source>
</evidence>
<evidence type="ECO:0000305" key="3"/>
<evidence type="ECO:0007829" key="4">
    <source>
        <dbReference type="PDB" id="7F0D"/>
    </source>
</evidence>
<keyword id="KW-0002">3D-structure</keyword>
<keyword id="KW-1185">Reference proteome</keyword>
<keyword id="KW-0687">Ribonucleoprotein</keyword>
<keyword id="KW-0689">Ribosomal protein</keyword>
<name>RL35_MYCTA</name>
<protein>
    <recommendedName>
        <fullName evidence="1">Large ribosomal subunit protein bL35</fullName>
    </recommendedName>
    <alternativeName>
        <fullName evidence="3">50S ribosomal protein L35</fullName>
    </alternativeName>
</protein>
<reference key="1">
    <citation type="journal article" date="2008" name="PLoS ONE">
        <title>Genetic basis of virulence attenuation revealed by comparative genomic analysis of Mycobacterium tuberculosis strain H37Ra versus H37Rv.</title>
        <authorList>
            <person name="Zheng H."/>
            <person name="Lu L."/>
            <person name="Wang B."/>
            <person name="Pu S."/>
            <person name="Zhang X."/>
            <person name="Zhu G."/>
            <person name="Shi W."/>
            <person name="Zhang L."/>
            <person name="Wang H."/>
            <person name="Wang S."/>
            <person name="Zhao G."/>
            <person name="Zhang Y."/>
        </authorList>
    </citation>
    <scope>NUCLEOTIDE SEQUENCE [LARGE SCALE GENOMIC DNA]</scope>
    <source>
        <strain>ATCC 25177 / H37Ra</strain>
    </source>
</reference>
<sequence length="64" mass="7220">MPKAKTHSGASKRFRRTGTGKIVRQKANRRHLLEHKPSTRTRRLDGRTVVAANDTKRVTSLLNG</sequence>
<organism>
    <name type="scientific">Mycobacterium tuberculosis (strain ATCC 25177 / H37Ra)</name>
    <dbReference type="NCBI Taxonomy" id="419947"/>
    <lineage>
        <taxon>Bacteria</taxon>
        <taxon>Bacillati</taxon>
        <taxon>Actinomycetota</taxon>
        <taxon>Actinomycetes</taxon>
        <taxon>Mycobacteriales</taxon>
        <taxon>Mycobacteriaceae</taxon>
        <taxon>Mycobacterium</taxon>
        <taxon>Mycobacterium tuberculosis complex</taxon>
    </lineage>
</organism>
<feature type="chain" id="PRO_1000050723" description="Large ribosomal subunit protein bL35">
    <location>
        <begin position="1"/>
        <end position="64"/>
    </location>
</feature>
<feature type="region of interest" description="Disordered" evidence="2">
    <location>
        <begin position="1"/>
        <end position="22"/>
    </location>
</feature>
<feature type="helix" evidence="4">
    <location>
        <begin position="8"/>
        <end position="11"/>
    </location>
</feature>
<feature type="strand" evidence="4">
    <location>
        <begin position="18"/>
        <end position="20"/>
    </location>
</feature>
<feature type="strand" evidence="4">
    <location>
        <begin position="22"/>
        <end position="25"/>
    </location>
</feature>
<feature type="strand" evidence="4">
    <location>
        <begin position="34"/>
        <end position="36"/>
    </location>
</feature>
<feature type="helix" evidence="4">
    <location>
        <begin position="39"/>
        <end position="42"/>
    </location>
</feature>
<feature type="strand" evidence="4">
    <location>
        <begin position="43"/>
        <end position="49"/>
    </location>
</feature>
<feature type="helix" evidence="4">
    <location>
        <begin position="52"/>
        <end position="54"/>
    </location>
</feature>
<feature type="helix" evidence="4">
    <location>
        <begin position="55"/>
        <end position="61"/>
    </location>
</feature>
<accession>A5U2Z9</accession>